<sequence>MLKKISLFDNLEQWVDLSLLMIRTSFLDANYFGVAKLSLFKYGNYLIDNLNQAQWKTLSQVLQLNKQPYSGFLLVNNHQYLPLQKIKFNLCEEIDLRNKNKWLFPNSFSIFLKQDLSYKKDQNYFNLVNIPKQLKWFLGFNALNDLFRFSILKIENVNQKTSKVINQFFTSKFINSIYFEQVDFEYNNFLTLIEKNERELVDFNCMFFNQLFTFNNKVIKSFFERYYALNEQKNNLKNKLKIAAYEAKSRDNSYFEKLQIERAKQRLFDAKKTFSKQHKNALQLINSFTFSLIFSGWKIKWRSFFNFYRKRILEKKIVSKRIKTRILLLKEIKKMDLLSPKLLVETIDESINLVNKIFANIQNLYQEIISLKSGPNLNWKYQTINQELKIMSARFILTKKEVHEFLIKARLSFIKNFVKQSNNLYVHEKLVNELKENILLNQNHYRGKHNNSFSVLIQKTVFKQFIDTVQYAIGLISMRKSLETFNFAFQIKQYFYESLLANYQKINWQKYELNNLYFVLISLWNSLSKKFQQFFNKYEFLSCGSNDFIWNEGRSEPHFSLLKDKLKNDLNSPKWNFLVDKVINKYLDLNFETPVSFLLASRGFSSTTDTTNKETKNDLKQKLKKCKQKYKLLLKDINLVKWIFRDETNQKLQKIKFIMKRYCILNKTLHLRLKKTNKKIKRTFFIDSEECNINRLEASNKLYLNVLNSQLKTINFFLRSQKNLKKLNFINNINLLINQTKKNGISSWMLFSDLNKINKNESLKLYLLFKLLLNPKLLMINCCNDFTNHAYNFIRGLLISYQNKQGIALIFNDPNNKLVKNFSIKNIDFETGMKK</sequence>
<feature type="chain" id="PRO_0000210602" description="Uncharacterized protein MG422">
    <location>
        <begin position="1"/>
        <end position="835"/>
    </location>
</feature>
<dbReference type="EMBL" id="L43967">
    <property type="protein sequence ID" value="AAC71646.1"/>
    <property type="molecule type" value="Genomic_DNA"/>
</dbReference>
<dbReference type="EMBL" id="U02117">
    <property type="protein sequence ID" value="AAD12391.1"/>
    <property type="molecule type" value="Genomic_DNA"/>
</dbReference>
<dbReference type="PIR" id="F64246">
    <property type="entry name" value="F64246"/>
</dbReference>
<dbReference type="RefSeq" id="WP_010869478.1">
    <property type="nucleotide sequence ID" value="NC_000908.2"/>
</dbReference>
<dbReference type="SMR" id="P47661"/>
<dbReference type="STRING" id="243273.MG_422"/>
<dbReference type="GeneID" id="88282604"/>
<dbReference type="KEGG" id="mge:MG_422"/>
<dbReference type="eggNOG" id="ENOG5030NAJ">
    <property type="taxonomic scope" value="Bacteria"/>
</dbReference>
<dbReference type="HOGENOM" id="CLU_338843_0_0_14"/>
<dbReference type="InParanoid" id="P47661"/>
<dbReference type="OrthoDB" id="9968103at2"/>
<dbReference type="BioCyc" id="MGEN243273:G1GJ2-516-MONOMER"/>
<dbReference type="Proteomes" id="UP000000807">
    <property type="component" value="Chromosome"/>
</dbReference>
<gene>
    <name type="ordered locus">MG422</name>
</gene>
<proteinExistence type="predicted"/>
<accession>P47661</accession>
<organism>
    <name type="scientific">Mycoplasma genitalium (strain ATCC 33530 / DSM 19775 / NCTC 10195 / G37)</name>
    <name type="common">Mycoplasmoides genitalium</name>
    <dbReference type="NCBI Taxonomy" id="243273"/>
    <lineage>
        <taxon>Bacteria</taxon>
        <taxon>Bacillati</taxon>
        <taxon>Mycoplasmatota</taxon>
        <taxon>Mycoplasmoidales</taxon>
        <taxon>Mycoplasmoidaceae</taxon>
        <taxon>Mycoplasmoides</taxon>
    </lineage>
</organism>
<name>Y422_MYCGE</name>
<reference key="1">
    <citation type="journal article" date="1995" name="Science">
        <title>The minimal gene complement of Mycoplasma genitalium.</title>
        <authorList>
            <person name="Fraser C.M."/>
            <person name="Gocayne J.D."/>
            <person name="White O."/>
            <person name="Adams M.D."/>
            <person name="Clayton R.A."/>
            <person name="Fleischmann R.D."/>
            <person name="Bult C.J."/>
            <person name="Kerlavage A.R."/>
            <person name="Sutton G.G."/>
            <person name="Kelley J.M."/>
            <person name="Fritchman J.L."/>
            <person name="Weidman J.F."/>
            <person name="Small K.V."/>
            <person name="Sandusky M."/>
            <person name="Fuhrmann J.L."/>
            <person name="Nguyen D.T."/>
            <person name="Utterback T.R."/>
            <person name="Saudek D.M."/>
            <person name="Phillips C.A."/>
            <person name="Merrick J.M."/>
            <person name="Tomb J.-F."/>
            <person name="Dougherty B.A."/>
            <person name="Bott K.F."/>
            <person name="Hu P.-C."/>
            <person name="Lucier T.S."/>
            <person name="Peterson S.N."/>
            <person name="Smith H.O."/>
            <person name="Hutchison C.A. III"/>
            <person name="Venter J.C."/>
        </authorList>
    </citation>
    <scope>NUCLEOTIDE SEQUENCE [LARGE SCALE GENOMIC DNA]</scope>
    <source>
        <strain>ATCC 33530 / DSM 19775 / NCTC 10195 / G37</strain>
    </source>
</reference>
<reference key="2">
    <citation type="journal article" date="1993" name="J. Bacteriol.">
        <title>A survey of the Mycoplasma genitalium genome by using random sequencing.</title>
        <authorList>
            <person name="Peterson S.N."/>
            <person name="Hu P.-C."/>
            <person name="Bott K.F."/>
            <person name="Hutchison C.A. III"/>
        </authorList>
    </citation>
    <scope>NUCLEOTIDE SEQUENCE [GENOMIC DNA] OF 701-758</scope>
    <source>
        <strain>ATCC 33530 / DSM 19775 / NCTC 10195 / G37</strain>
    </source>
</reference>
<keyword id="KW-1185">Reference proteome</keyword>
<protein>
    <recommendedName>
        <fullName>Uncharacterized protein MG422</fullName>
    </recommendedName>
</protein>